<reference key="1">
    <citation type="journal article" date="2004" name="Nature">
        <title>Genome evolution in yeasts.</title>
        <authorList>
            <person name="Dujon B."/>
            <person name="Sherman D."/>
            <person name="Fischer G."/>
            <person name="Durrens P."/>
            <person name="Casaregola S."/>
            <person name="Lafontaine I."/>
            <person name="de Montigny J."/>
            <person name="Marck C."/>
            <person name="Neuveglise C."/>
            <person name="Talla E."/>
            <person name="Goffard N."/>
            <person name="Frangeul L."/>
            <person name="Aigle M."/>
            <person name="Anthouard V."/>
            <person name="Babour A."/>
            <person name="Barbe V."/>
            <person name="Barnay S."/>
            <person name="Blanchin S."/>
            <person name="Beckerich J.-M."/>
            <person name="Beyne E."/>
            <person name="Bleykasten C."/>
            <person name="Boisrame A."/>
            <person name="Boyer J."/>
            <person name="Cattolico L."/>
            <person name="Confanioleri F."/>
            <person name="de Daruvar A."/>
            <person name="Despons L."/>
            <person name="Fabre E."/>
            <person name="Fairhead C."/>
            <person name="Ferry-Dumazet H."/>
            <person name="Groppi A."/>
            <person name="Hantraye F."/>
            <person name="Hennequin C."/>
            <person name="Jauniaux N."/>
            <person name="Joyet P."/>
            <person name="Kachouri R."/>
            <person name="Kerrest A."/>
            <person name="Koszul R."/>
            <person name="Lemaire M."/>
            <person name="Lesur I."/>
            <person name="Ma L."/>
            <person name="Muller H."/>
            <person name="Nicaud J.-M."/>
            <person name="Nikolski M."/>
            <person name="Oztas S."/>
            <person name="Ozier-Kalogeropoulos O."/>
            <person name="Pellenz S."/>
            <person name="Potier S."/>
            <person name="Richard G.-F."/>
            <person name="Straub M.-L."/>
            <person name="Suleau A."/>
            <person name="Swennen D."/>
            <person name="Tekaia F."/>
            <person name="Wesolowski-Louvel M."/>
            <person name="Westhof E."/>
            <person name="Wirth B."/>
            <person name="Zeniou-Meyer M."/>
            <person name="Zivanovic Y."/>
            <person name="Bolotin-Fukuhara M."/>
            <person name="Thierry A."/>
            <person name="Bouchier C."/>
            <person name="Caudron B."/>
            <person name="Scarpelli C."/>
            <person name="Gaillardin C."/>
            <person name="Weissenbach J."/>
            <person name="Wincker P."/>
            <person name="Souciet J.-L."/>
        </authorList>
    </citation>
    <scope>NUCLEOTIDE SEQUENCE [LARGE SCALE GENOMIC DNA]</scope>
    <source>
        <strain>ATCC 8585 / CBS 2359 / DSM 70799 / NBRC 1267 / NRRL Y-1140 / WM37</strain>
    </source>
</reference>
<proteinExistence type="inferred from homology"/>
<dbReference type="EC" id="3.6.4.13"/>
<dbReference type="EMBL" id="CR382124">
    <property type="protein sequence ID" value="CAH00581.1"/>
    <property type="molecule type" value="Genomic_DNA"/>
</dbReference>
<dbReference type="RefSeq" id="XP_453485.1">
    <property type="nucleotide sequence ID" value="XM_453485.1"/>
</dbReference>
<dbReference type="SMR" id="Q6CRF4"/>
<dbReference type="FunCoup" id="Q6CRF4">
    <property type="interactions" value="1140"/>
</dbReference>
<dbReference type="STRING" id="284590.Q6CRF4"/>
<dbReference type="PaxDb" id="284590-Q6CRF4"/>
<dbReference type="KEGG" id="kla:KLLA0_D09504g"/>
<dbReference type="eggNOG" id="KOG0343">
    <property type="taxonomic scope" value="Eukaryota"/>
</dbReference>
<dbReference type="HOGENOM" id="CLU_003041_26_1_1"/>
<dbReference type="InParanoid" id="Q6CRF4"/>
<dbReference type="OMA" id="YDKMFER"/>
<dbReference type="Proteomes" id="UP000000598">
    <property type="component" value="Chromosome D"/>
</dbReference>
<dbReference type="GO" id="GO:0005730">
    <property type="term" value="C:nucleolus"/>
    <property type="evidence" value="ECO:0007669"/>
    <property type="project" value="UniProtKB-SubCell"/>
</dbReference>
<dbReference type="GO" id="GO:0005524">
    <property type="term" value="F:ATP binding"/>
    <property type="evidence" value="ECO:0007669"/>
    <property type="project" value="UniProtKB-KW"/>
</dbReference>
<dbReference type="GO" id="GO:0016887">
    <property type="term" value="F:ATP hydrolysis activity"/>
    <property type="evidence" value="ECO:0007669"/>
    <property type="project" value="RHEA"/>
</dbReference>
<dbReference type="GO" id="GO:0003723">
    <property type="term" value="F:RNA binding"/>
    <property type="evidence" value="ECO:0007669"/>
    <property type="project" value="UniProtKB-KW"/>
</dbReference>
<dbReference type="GO" id="GO:0003724">
    <property type="term" value="F:RNA helicase activity"/>
    <property type="evidence" value="ECO:0007669"/>
    <property type="project" value="UniProtKB-EC"/>
</dbReference>
<dbReference type="GO" id="GO:0006364">
    <property type="term" value="P:rRNA processing"/>
    <property type="evidence" value="ECO:0007669"/>
    <property type="project" value="UniProtKB-KW"/>
</dbReference>
<dbReference type="CDD" id="cd17941">
    <property type="entry name" value="DEADc_DDX10"/>
    <property type="match status" value="1"/>
</dbReference>
<dbReference type="CDD" id="cd18787">
    <property type="entry name" value="SF2_C_DEAD"/>
    <property type="match status" value="1"/>
</dbReference>
<dbReference type="FunFam" id="3.40.50.300:FF:001632">
    <property type="entry name" value="RNA helicase"/>
    <property type="match status" value="1"/>
</dbReference>
<dbReference type="Gene3D" id="3.40.50.300">
    <property type="entry name" value="P-loop containing nucleotide triphosphate hydrolases"/>
    <property type="match status" value="2"/>
</dbReference>
<dbReference type="InterPro" id="IPR011545">
    <property type="entry name" value="DEAD/DEAH_box_helicase_dom"/>
</dbReference>
<dbReference type="InterPro" id="IPR014001">
    <property type="entry name" value="Helicase_ATP-bd"/>
</dbReference>
<dbReference type="InterPro" id="IPR001650">
    <property type="entry name" value="Helicase_C-like"/>
</dbReference>
<dbReference type="InterPro" id="IPR027417">
    <property type="entry name" value="P-loop_NTPase"/>
</dbReference>
<dbReference type="InterPro" id="IPR000629">
    <property type="entry name" value="RNA-helicase_DEAD-box_CS"/>
</dbReference>
<dbReference type="InterPro" id="IPR014014">
    <property type="entry name" value="RNA_helicase_DEAD_Q_motif"/>
</dbReference>
<dbReference type="InterPro" id="IPR025313">
    <property type="entry name" value="SPB4-like_CTE"/>
</dbReference>
<dbReference type="PANTHER" id="PTHR24031">
    <property type="entry name" value="RNA HELICASE"/>
    <property type="match status" value="1"/>
</dbReference>
<dbReference type="Pfam" id="PF13959">
    <property type="entry name" value="CTE_SPB4"/>
    <property type="match status" value="1"/>
</dbReference>
<dbReference type="Pfam" id="PF00270">
    <property type="entry name" value="DEAD"/>
    <property type="match status" value="1"/>
</dbReference>
<dbReference type="Pfam" id="PF00271">
    <property type="entry name" value="Helicase_C"/>
    <property type="match status" value="1"/>
</dbReference>
<dbReference type="SMART" id="SM00487">
    <property type="entry name" value="DEXDc"/>
    <property type="match status" value="1"/>
</dbReference>
<dbReference type="SMART" id="SM01178">
    <property type="entry name" value="DUF4217"/>
    <property type="match status" value="1"/>
</dbReference>
<dbReference type="SMART" id="SM00490">
    <property type="entry name" value="HELICc"/>
    <property type="match status" value="1"/>
</dbReference>
<dbReference type="SUPFAM" id="SSF52540">
    <property type="entry name" value="P-loop containing nucleoside triphosphate hydrolases"/>
    <property type="match status" value="1"/>
</dbReference>
<dbReference type="PROSITE" id="PS00039">
    <property type="entry name" value="DEAD_ATP_HELICASE"/>
    <property type="match status" value="1"/>
</dbReference>
<dbReference type="PROSITE" id="PS51192">
    <property type="entry name" value="HELICASE_ATP_BIND_1"/>
    <property type="match status" value="1"/>
</dbReference>
<dbReference type="PROSITE" id="PS51194">
    <property type="entry name" value="HELICASE_CTER"/>
    <property type="match status" value="1"/>
</dbReference>
<dbReference type="PROSITE" id="PS51195">
    <property type="entry name" value="Q_MOTIF"/>
    <property type="match status" value="1"/>
</dbReference>
<organism>
    <name type="scientific">Kluyveromyces lactis (strain ATCC 8585 / CBS 2359 / DSM 70799 / NBRC 1267 / NRRL Y-1140 / WM37)</name>
    <name type="common">Yeast</name>
    <name type="synonym">Candida sphaerica</name>
    <dbReference type="NCBI Taxonomy" id="284590"/>
    <lineage>
        <taxon>Eukaryota</taxon>
        <taxon>Fungi</taxon>
        <taxon>Dikarya</taxon>
        <taxon>Ascomycota</taxon>
        <taxon>Saccharomycotina</taxon>
        <taxon>Saccharomycetes</taxon>
        <taxon>Saccharomycetales</taxon>
        <taxon>Saccharomycetaceae</taxon>
        <taxon>Kluyveromyces</taxon>
    </lineage>
</organism>
<name>DBP4_KLULA</name>
<comment type="function">
    <text evidence="1">ATP-dependent RNA helicase required for ribosome biogenesis. Involved in the release of U14 snoRNA in pre-ribosomal complexes. Required for pre-rRNA cleavage at site A2 (By similarity).</text>
</comment>
<comment type="catalytic activity">
    <reaction>
        <text>ATP + H2O = ADP + phosphate + H(+)</text>
        <dbReference type="Rhea" id="RHEA:13065"/>
        <dbReference type="ChEBI" id="CHEBI:15377"/>
        <dbReference type="ChEBI" id="CHEBI:15378"/>
        <dbReference type="ChEBI" id="CHEBI:30616"/>
        <dbReference type="ChEBI" id="CHEBI:43474"/>
        <dbReference type="ChEBI" id="CHEBI:456216"/>
        <dbReference type="EC" id="3.6.4.13"/>
    </reaction>
</comment>
<comment type="subunit">
    <text evidence="1">Interacts with the U3 and U14 snoRNAs. Associates with pre-ribosomal complexes (By similarity).</text>
</comment>
<comment type="subcellular location">
    <subcellularLocation>
        <location evidence="1">Nucleus</location>
        <location evidence="1">Nucleolus</location>
    </subcellularLocation>
</comment>
<comment type="domain">
    <text>The Q motif is unique to and characteristic of the DEAD box family of RNA helicases and controls ATP binding and hydrolysis.</text>
</comment>
<comment type="similarity">
    <text evidence="5">Belongs to the DEAD box helicase family. DDX10/DBP4 subfamily.</text>
</comment>
<keyword id="KW-0067">ATP-binding</keyword>
<keyword id="KW-0347">Helicase</keyword>
<keyword id="KW-0378">Hydrolase</keyword>
<keyword id="KW-0547">Nucleotide-binding</keyword>
<keyword id="KW-0539">Nucleus</keyword>
<keyword id="KW-1185">Reference proteome</keyword>
<keyword id="KW-0690">Ribosome biogenesis</keyword>
<keyword id="KW-0694">RNA-binding</keyword>
<keyword id="KW-0698">rRNA processing</keyword>
<feature type="chain" id="PRO_0000232201" description="ATP-dependent RNA helicase DBP4">
    <location>
        <begin position="1"/>
        <end position="770"/>
    </location>
</feature>
<feature type="domain" description="Helicase ATP-binding" evidence="2">
    <location>
        <begin position="72"/>
        <end position="246"/>
    </location>
</feature>
<feature type="domain" description="Helicase C-terminal" evidence="3">
    <location>
        <begin position="276"/>
        <end position="435"/>
    </location>
</feature>
<feature type="region of interest" description="Disordered" evidence="4">
    <location>
        <begin position="596"/>
        <end position="615"/>
    </location>
</feature>
<feature type="region of interest" description="Disordered" evidence="4">
    <location>
        <begin position="650"/>
        <end position="770"/>
    </location>
</feature>
<feature type="short sequence motif" description="Q motif">
    <location>
        <begin position="41"/>
        <end position="69"/>
    </location>
</feature>
<feature type="short sequence motif" description="DEAD box">
    <location>
        <begin position="194"/>
        <end position="197"/>
    </location>
</feature>
<feature type="compositionally biased region" description="Basic and acidic residues" evidence="4">
    <location>
        <begin position="650"/>
        <end position="667"/>
    </location>
</feature>
<feature type="compositionally biased region" description="Acidic residues" evidence="4">
    <location>
        <begin position="683"/>
        <end position="694"/>
    </location>
</feature>
<feature type="compositionally biased region" description="Polar residues" evidence="4">
    <location>
        <begin position="701"/>
        <end position="711"/>
    </location>
</feature>
<feature type="compositionally biased region" description="Acidic residues" evidence="4">
    <location>
        <begin position="732"/>
        <end position="741"/>
    </location>
</feature>
<feature type="compositionally biased region" description="Acidic residues" evidence="4">
    <location>
        <begin position="751"/>
        <end position="761"/>
    </location>
</feature>
<feature type="binding site" evidence="2">
    <location>
        <begin position="85"/>
        <end position="92"/>
    </location>
    <ligand>
        <name>ATP</name>
        <dbReference type="ChEBI" id="CHEBI:30616"/>
    </ligand>
</feature>
<gene>
    <name type="primary">DBP4</name>
    <name type="ordered locus">KLLA0D09504g</name>
</gene>
<protein>
    <recommendedName>
        <fullName>ATP-dependent RNA helicase DBP4</fullName>
        <ecNumber>3.6.4.13</ecNumber>
    </recommendedName>
</protein>
<evidence type="ECO:0000250" key="1"/>
<evidence type="ECO:0000255" key="2">
    <source>
        <dbReference type="PROSITE-ProRule" id="PRU00541"/>
    </source>
</evidence>
<evidence type="ECO:0000255" key="3">
    <source>
        <dbReference type="PROSITE-ProRule" id="PRU00542"/>
    </source>
</evidence>
<evidence type="ECO:0000256" key="4">
    <source>
        <dbReference type="SAM" id="MobiDB-lite"/>
    </source>
</evidence>
<evidence type="ECO:0000305" key="5"/>
<sequence>MAKKQKHNTQQRKLIRERDSQKIKDLETKVEEYNPKIAKANLFQDLPISEQTLKGLKEAAFIKLTEIQRESIPLSLKGHDVLGAAKTGSGKTLAFLIPVIEKLYREKWTDMDGLGALIISPTRELAMQIYEVLSKIGKHTTFSAGLVIGGKDVTFEKERISRINILIGTPGRILQHMDQAVGFNTSNLQLLVLDEADRCLDMGFKRTLDAIINNLPASRQTLLFSATQSQSLDDLARLSLTDYKQVGTMEVLNANSSSATPESLQQSYIEVPLPDKLDILFSFIKSHLKSKLIVFLSSSKQVHFVYETFRKLQPGISLMHLHGRQKQTARTETLDKFSRAQHVCLFSTDVVARGIDFPSVDWVIQVDCPEDVDTYIHRVGRAARFGKEGKSLIMLTPEEEEGFLKRLKTKNIEPSRLNIKQSKKKSIKPQLQSLLFKDPELKYLGQKAFISYVRSIYIQKDKEVFHFDKIPLEQFANSLGLPGAPKIKMRGMKSIEKAKELKNTSRQLLTLAKANDEGDVIKENKPEVRTRYDKMFERKNQTVLSEHYLNVTKAQAHDDEDEDFIMVKRQDHELNEAELPELLVPTSKRAQKKALSRKATLASNGNPTKVKFDDDGKAHPVYELEDEQDFRQNGNSEKQKEEFLSKEAELMAKVDVEDKQVAKEKRQEKKRKRLEAMRKEMEADMEDSDYEDEPVAYLGTGNLSDDMQSGADTEDDSQDERQPRKKSKYADSSEDEEEEERTTERDRIIEVEEPQTLEDLESLTANLIGS</sequence>
<accession>Q6CRF4</accession>